<keyword id="KW-0002">3D-structure</keyword>
<keyword id="KW-0997">Cell inner membrane</keyword>
<keyword id="KW-1003">Cell membrane</keyword>
<keyword id="KW-0472">Membrane</keyword>
<keyword id="KW-1185">Reference proteome</keyword>
<keyword id="KW-0812">Transmembrane</keyword>
<keyword id="KW-1133">Transmembrane helix</keyword>
<feature type="chain" id="PRO_0000094056" description="Protein QmcA">
    <location>
        <begin position="1"/>
        <end position="305"/>
    </location>
</feature>
<feature type="topological domain" description="Periplasmic" evidence="4">
    <location>
        <begin position="1"/>
        <end position="2"/>
    </location>
</feature>
<feature type="transmembrane region" description="Helical" evidence="1">
    <location>
        <begin position="3"/>
        <end position="23"/>
    </location>
</feature>
<feature type="topological domain" description="Cytoplasmic" evidence="4">
    <location>
        <begin position="24"/>
        <end position="305"/>
    </location>
</feature>
<comment type="function">
    <text>Identified as a multi-copy suppressor of an FtsH/HtpX protease double disruption mutant. May play a role in the quality control of integral membrane proteins.</text>
</comment>
<comment type="subunit">
    <text evidence="2">Forms oligomers. Probably interacts weakly with FtsH.</text>
</comment>
<comment type="subcellular location">
    <subcellularLocation>
        <location evidence="2">Cell inner membrane</location>
        <topology evidence="2">Single-pass type I membrane protein</topology>
    </subcellularLocation>
</comment>
<comment type="disruption phenotype">
    <text evidence="2">No visible phenotype.</text>
</comment>
<comment type="similarity">
    <text evidence="3">Belongs to the band 7/mec-2 family.</text>
</comment>
<proteinExistence type="evidence at protein level"/>
<protein>
    <recommendedName>
        <fullName>Protein QmcA</fullName>
    </recommendedName>
</protein>
<reference key="1">
    <citation type="submission" date="1997-01" db="EMBL/GenBank/DDBJ databases">
        <title>Sequence of minutes 4-25 of Escherichia coli.</title>
        <authorList>
            <person name="Chung E."/>
            <person name="Allen E."/>
            <person name="Araujo R."/>
            <person name="Aparicio A.M."/>
            <person name="Davis K."/>
            <person name="Duncan M."/>
            <person name="Federspiel N."/>
            <person name="Hyman R."/>
            <person name="Kalman S."/>
            <person name="Komp C."/>
            <person name="Kurdi O."/>
            <person name="Lew H."/>
            <person name="Lin D."/>
            <person name="Namath A."/>
            <person name="Oefner P."/>
            <person name="Roberts D."/>
            <person name="Schramm S."/>
            <person name="Davis R.W."/>
        </authorList>
    </citation>
    <scope>NUCLEOTIDE SEQUENCE [LARGE SCALE GENOMIC DNA]</scope>
    <source>
        <strain>K12 / MG1655 / ATCC 47076</strain>
    </source>
</reference>
<reference key="2">
    <citation type="journal article" date="1997" name="Science">
        <title>The complete genome sequence of Escherichia coli K-12.</title>
        <authorList>
            <person name="Blattner F.R."/>
            <person name="Plunkett G. III"/>
            <person name="Bloch C.A."/>
            <person name="Perna N.T."/>
            <person name="Burland V."/>
            <person name="Riley M."/>
            <person name="Collado-Vides J."/>
            <person name="Glasner J.D."/>
            <person name="Rode C.K."/>
            <person name="Mayhew G.F."/>
            <person name="Gregor J."/>
            <person name="Davis N.W."/>
            <person name="Kirkpatrick H.A."/>
            <person name="Goeden M.A."/>
            <person name="Rose D.J."/>
            <person name="Mau B."/>
            <person name="Shao Y."/>
        </authorList>
    </citation>
    <scope>NUCLEOTIDE SEQUENCE [LARGE SCALE GENOMIC DNA]</scope>
    <source>
        <strain>K12 / MG1655 / ATCC 47076</strain>
    </source>
</reference>
<reference key="3">
    <citation type="journal article" date="2006" name="Mol. Syst. Biol.">
        <title>Highly accurate genome sequences of Escherichia coli K-12 strains MG1655 and W3110.</title>
        <authorList>
            <person name="Hayashi K."/>
            <person name="Morooka N."/>
            <person name="Yamamoto Y."/>
            <person name="Fujita K."/>
            <person name="Isono K."/>
            <person name="Choi S."/>
            <person name="Ohtsubo E."/>
            <person name="Baba T."/>
            <person name="Wanner B.L."/>
            <person name="Mori H."/>
            <person name="Horiuchi T."/>
        </authorList>
    </citation>
    <scope>NUCLEOTIDE SEQUENCE [LARGE SCALE GENOMIC DNA]</scope>
    <source>
        <strain>K12 / W3110 / ATCC 27325 / DSM 5911</strain>
    </source>
</reference>
<reference key="4">
    <citation type="journal article" date="2006" name="Mol. Microbiol.">
        <title>The Escherichia coli plasma membrane contains two PHB (prohibitin homology) domain protein complexes of opposite orientations.</title>
        <authorList>
            <person name="Chiba S."/>
            <person name="Ito K."/>
            <person name="Akiyama Y."/>
        </authorList>
    </citation>
    <scope>POSSIBLE FUNCTION</scope>
    <scope>SUBCELLULAR LOCATION</scope>
    <scope>TOPOLOGY</scope>
    <scope>POSSIBLE INTERACTION WITH FTSH</scope>
    <scope>SUBUNIT</scope>
    <scope>DISRUPTION PHENOTYPE</scope>
    <source>
        <strain>K12</strain>
    </source>
</reference>
<reference key="5">
    <citation type="journal article" date="2009" name="J. Biochem.">
        <title>Quality control of cytoplasmic membrane proteins in Escherichia coli.</title>
        <authorList>
            <person name="Akiyama Y."/>
        </authorList>
    </citation>
    <scope>REVIEW</scope>
</reference>
<accession>P0AA53</accession>
<accession>P77367</accession>
<accession>Q2MBT8</accession>
<name>QMCA_ECOLI</name>
<organism>
    <name type="scientific">Escherichia coli (strain K12)</name>
    <dbReference type="NCBI Taxonomy" id="83333"/>
    <lineage>
        <taxon>Bacteria</taxon>
        <taxon>Pseudomonadati</taxon>
        <taxon>Pseudomonadota</taxon>
        <taxon>Gammaproteobacteria</taxon>
        <taxon>Enterobacterales</taxon>
        <taxon>Enterobacteriaceae</taxon>
        <taxon>Escherichia</taxon>
    </lineage>
</organism>
<dbReference type="EMBL" id="U82664">
    <property type="protein sequence ID" value="AAB40243.1"/>
    <property type="molecule type" value="Genomic_DNA"/>
</dbReference>
<dbReference type="EMBL" id="U00096">
    <property type="protein sequence ID" value="AAC73591.1"/>
    <property type="molecule type" value="Genomic_DNA"/>
</dbReference>
<dbReference type="EMBL" id="AP009048">
    <property type="protein sequence ID" value="BAE76268.1"/>
    <property type="molecule type" value="Genomic_DNA"/>
</dbReference>
<dbReference type="PIR" id="H64779">
    <property type="entry name" value="H64779"/>
</dbReference>
<dbReference type="RefSeq" id="NP_415022.1">
    <property type="nucleotide sequence ID" value="NC_000913.3"/>
</dbReference>
<dbReference type="RefSeq" id="WP_000904502.1">
    <property type="nucleotide sequence ID" value="NZ_STEB01000007.1"/>
</dbReference>
<dbReference type="PDB" id="8Z5G">
    <property type="method" value="EM"/>
    <property type="resolution" value="2.90 A"/>
    <property type="chains" value="A/BA/C/DA/E/FA/G/HA/I/JA/K/LA/M/NA/O/PA/Q/RA/S/TA/V/VA/X/XA/Z/ZA=1-305"/>
</dbReference>
<dbReference type="PDBsum" id="8Z5G"/>
<dbReference type="EMDB" id="EMD-39773"/>
<dbReference type="SMR" id="P0AA53"/>
<dbReference type="BioGRID" id="4259648">
    <property type="interactions" value="32"/>
</dbReference>
<dbReference type="DIP" id="DIP-48137N"/>
<dbReference type="FunCoup" id="P0AA53">
    <property type="interactions" value="683"/>
</dbReference>
<dbReference type="IntAct" id="P0AA53">
    <property type="interactions" value="3"/>
</dbReference>
<dbReference type="STRING" id="511145.b0489"/>
<dbReference type="TCDB" id="8.A.21.2.2">
    <property type="family name" value="the stomatin/podocin/band 7/nephrosis,2/spfh (stomatin) family"/>
</dbReference>
<dbReference type="jPOST" id="P0AA53"/>
<dbReference type="PaxDb" id="511145-b0489"/>
<dbReference type="DNASU" id="947257"/>
<dbReference type="EnsemblBacteria" id="AAC73591">
    <property type="protein sequence ID" value="AAC73591"/>
    <property type="gene ID" value="b0489"/>
</dbReference>
<dbReference type="GeneID" id="947257"/>
<dbReference type="KEGG" id="ecj:JW0478"/>
<dbReference type="KEGG" id="eco:b0489"/>
<dbReference type="KEGG" id="ecoc:C3026_02405"/>
<dbReference type="PATRIC" id="fig|1411691.4.peg.1787"/>
<dbReference type="EchoBASE" id="EB3046"/>
<dbReference type="eggNOG" id="COG0330">
    <property type="taxonomic scope" value="Bacteria"/>
</dbReference>
<dbReference type="HOGENOM" id="CLU_024949_2_2_6"/>
<dbReference type="InParanoid" id="P0AA53"/>
<dbReference type="OMA" id="YLQMLPK"/>
<dbReference type="OrthoDB" id="9809197at2"/>
<dbReference type="PhylomeDB" id="P0AA53"/>
<dbReference type="BioCyc" id="EcoCyc:G6265-MONOMER"/>
<dbReference type="PRO" id="PR:P0AA53"/>
<dbReference type="Proteomes" id="UP000000625">
    <property type="component" value="Chromosome"/>
</dbReference>
<dbReference type="GO" id="GO:0005886">
    <property type="term" value="C:plasma membrane"/>
    <property type="evidence" value="ECO:0000314"/>
    <property type="project" value="EcoCyc"/>
</dbReference>
<dbReference type="GO" id="GO:0042802">
    <property type="term" value="F:identical protein binding"/>
    <property type="evidence" value="ECO:0000314"/>
    <property type="project" value="EcoCyc"/>
</dbReference>
<dbReference type="CDD" id="cd08829">
    <property type="entry name" value="SPFH_paraslipin"/>
    <property type="match status" value="1"/>
</dbReference>
<dbReference type="FunFam" id="3.30.479.30:FF:000006">
    <property type="entry name" value="SPFH/Band 7/PHB domain protein"/>
    <property type="match status" value="1"/>
</dbReference>
<dbReference type="Gene3D" id="3.30.479.30">
    <property type="entry name" value="Band 7 domain"/>
    <property type="match status" value="1"/>
</dbReference>
<dbReference type="InterPro" id="IPR050710">
    <property type="entry name" value="Band7/mec-2_domain"/>
</dbReference>
<dbReference type="InterPro" id="IPR001107">
    <property type="entry name" value="Band_7"/>
</dbReference>
<dbReference type="InterPro" id="IPR036013">
    <property type="entry name" value="Band_7/SPFH_dom_sf"/>
</dbReference>
<dbReference type="InterPro" id="IPR018080">
    <property type="entry name" value="Band_7/stomatin-like_CS"/>
</dbReference>
<dbReference type="InterPro" id="IPR001972">
    <property type="entry name" value="Stomatin_HflK_fam"/>
</dbReference>
<dbReference type="PANTHER" id="PTHR43327">
    <property type="entry name" value="STOMATIN-LIKE PROTEIN 2, MITOCHONDRIAL"/>
    <property type="match status" value="1"/>
</dbReference>
<dbReference type="PANTHER" id="PTHR43327:SF10">
    <property type="entry name" value="STOMATIN-LIKE PROTEIN 2, MITOCHONDRIAL"/>
    <property type="match status" value="1"/>
</dbReference>
<dbReference type="Pfam" id="PF01145">
    <property type="entry name" value="Band_7"/>
    <property type="match status" value="1"/>
</dbReference>
<dbReference type="PRINTS" id="PR00721">
    <property type="entry name" value="STOMATIN"/>
</dbReference>
<dbReference type="SMART" id="SM00244">
    <property type="entry name" value="PHB"/>
    <property type="match status" value="1"/>
</dbReference>
<dbReference type="SUPFAM" id="SSF117892">
    <property type="entry name" value="Band 7/SPFH domain"/>
    <property type="match status" value="1"/>
</dbReference>
<dbReference type="PROSITE" id="PS01270">
    <property type="entry name" value="BAND_7"/>
    <property type="match status" value="1"/>
</dbReference>
<sequence>MLIFIPILIFVALVIVGAGVKIVPQGYQWTVERFGRYTKTLQPGLSLVVPFMDRIGRKINMMEQVLDIPSQEVISKDNANVTIDAVCFIQVIDAPRAAYEVSNLELAIINLTMTNIRTVLGSMELDEMLSQRDSINSRLLRIVDEATNPWGIKVTRIEIRDVRPPAELISSMNAQMKAERTKRAYILEAEGIRQAEILKAEGEKQSQILKAEGERQSAFLQAEARERSAEAEARATKMVSEAIASGDIQAVNYFVAQKYTEALQQIGSSSNSKVVMMPLEASSLMGSIAGIAELVKDSANKRTQP</sequence>
<evidence type="ECO:0000255" key="1"/>
<evidence type="ECO:0000269" key="2">
    <source>
    </source>
</evidence>
<evidence type="ECO:0000305" key="3"/>
<evidence type="ECO:0000305" key="4">
    <source>
    </source>
</evidence>
<gene>
    <name type="primary">qmcA</name>
    <name type="synonym">ybbK</name>
    <name type="ordered locus">b0489</name>
    <name type="ordered locus">JW0478</name>
</gene>